<organism>
    <name type="scientific">Rhizobium meliloti (strain 1021)</name>
    <name type="common">Ensifer meliloti</name>
    <name type="synonym">Sinorhizobium meliloti</name>
    <dbReference type="NCBI Taxonomy" id="266834"/>
    <lineage>
        <taxon>Bacteria</taxon>
        <taxon>Pseudomonadati</taxon>
        <taxon>Pseudomonadota</taxon>
        <taxon>Alphaproteobacteria</taxon>
        <taxon>Hyphomicrobiales</taxon>
        <taxon>Rhizobiaceae</taxon>
        <taxon>Sinorhizobium/Ensifer group</taxon>
        <taxon>Sinorhizobium</taxon>
    </lineage>
</organism>
<sequence>MLRDEDRIFTNIYGLKDKSLRGAMARGHWDGTKQFLEKGRDWIINEVKASGLRGRGGAGFPTGLKWSFMPKESDGRPHYLVVNADESEPGTCKDRDIMRHDPHTLIEGCVIASFAMGAHAAYIYVRGEFIREREALQAAIDECYEYGLLGKNNKLGYDIDIYVHHGAGAYICGEETALLESLEGKKGQPRLKPPFPANMGLYGCPTTVNNVESIAVTPTILRRGAGWYTSFGRPNNHGTKLYSVSGHVNRPCTVEDAMSIPFHELIEKHCGGIRGGWDNLLAVIPGGSSVPCVPGAQMKDAIMDYDGLRELGSGLGTAAVIVMDKSTDIIKAIWRLSAFYKHESCGQCTPCREGTGWMMRVMERMVQGRAQKREIDMLFDVTKQVEGHTICALGDAAAWPIQGLIKHFRPEMEKRIDEYTRNATSHGAVLEAAE</sequence>
<keyword id="KW-0004">4Fe-4S</keyword>
<keyword id="KW-0285">Flavoprotein</keyword>
<keyword id="KW-0288">FMN</keyword>
<keyword id="KW-0408">Iron</keyword>
<keyword id="KW-0411">Iron-sulfur</keyword>
<keyword id="KW-0479">Metal-binding</keyword>
<keyword id="KW-0520">NAD</keyword>
<keyword id="KW-0874">Quinone</keyword>
<keyword id="KW-1185">Reference proteome</keyword>
<keyword id="KW-1278">Translocase</keyword>
<keyword id="KW-0830">Ubiquinone</keyword>
<dbReference type="EC" id="7.1.1.-"/>
<dbReference type="EMBL" id="AJ245398">
    <property type="protein sequence ID" value="CAB51626.1"/>
    <property type="molecule type" value="Genomic_DNA"/>
</dbReference>
<dbReference type="EMBL" id="AL591688">
    <property type="protein sequence ID" value="CAC45849.1"/>
    <property type="molecule type" value="Genomic_DNA"/>
</dbReference>
<dbReference type="RefSeq" id="NP_385376.1">
    <property type="nucleotide sequence ID" value="NC_003047.1"/>
</dbReference>
<dbReference type="RefSeq" id="WP_003531839.1">
    <property type="nucleotide sequence ID" value="NC_003047.1"/>
</dbReference>
<dbReference type="SMR" id="P56912"/>
<dbReference type="EnsemblBacteria" id="CAC45849">
    <property type="protein sequence ID" value="CAC45849"/>
    <property type="gene ID" value="SMc01918"/>
</dbReference>
<dbReference type="GeneID" id="89575594"/>
<dbReference type="KEGG" id="sme:SMc01918"/>
<dbReference type="PATRIC" id="fig|266834.11.peg.2684"/>
<dbReference type="eggNOG" id="COG1894">
    <property type="taxonomic scope" value="Bacteria"/>
</dbReference>
<dbReference type="HOGENOM" id="CLU_014881_1_0_5"/>
<dbReference type="OrthoDB" id="9761899at2"/>
<dbReference type="Proteomes" id="UP000001976">
    <property type="component" value="Chromosome"/>
</dbReference>
<dbReference type="GO" id="GO:0051539">
    <property type="term" value="F:4 iron, 4 sulfur cluster binding"/>
    <property type="evidence" value="ECO:0007669"/>
    <property type="project" value="UniProtKB-KW"/>
</dbReference>
<dbReference type="GO" id="GO:0010181">
    <property type="term" value="F:FMN binding"/>
    <property type="evidence" value="ECO:0007669"/>
    <property type="project" value="InterPro"/>
</dbReference>
<dbReference type="GO" id="GO:0046872">
    <property type="term" value="F:metal ion binding"/>
    <property type="evidence" value="ECO:0007669"/>
    <property type="project" value="UniProtKB-KW"/>
</dbReference>
<dbReference type="GO" id="GO:0051287">
    <property type="term" value="F:NAD binding"/>
    <property type="evidence" value="ECO:0007669"/>
    <property type="project" value="InterPro"/>
</dbReference>
<dbReference type="GO" id="GO:0008137">
    <property type="term" value="F:NADH dehydrogenase (ubiquinone) activity"/>
    <property type="evidence" value="ECO:0007669"/>
    <property type="project" value="InterPro"/>
</dbReference>
<dbReference type="GO" id="GO:0048038">
    <property type="term" value="F:quinone binding"/>
    <property type="evidence" value="ECO:0007669"/>
    <property type="project" value="UniProtKB-KW"/>
</dbReference>
<dbReference type="FunFam" id="1.20.1440.230:FF:000001">
    <property type="entry name" value="Mitochondrial NADH dehydrogenase flavoprotein 1"/>
    <property type="match status" value="1"/>
</dbReference>
<dbReference type="FunFam" id="3.10.20.600:FF:000001">
    <property type="entry name" value="NADH dehydrogenase [ubiquinone] flavoprotein 1, mitochondrial"/>
    <property type="match status" value="1"/>
</dbReference>
<dbReference type="FunFam" id="3.40.50.11540:FF:000001">
    <property type="entry name" value="NADH dehydrogenase [ubiquinone] flavoprotein 1, mitochondrial"/>
    <property type="match status" value="1"/>
</dbReference>
<dbReference type="Gene3D" id="3.10.20.600">
    <property type="match status" value="1"/>
</dbReference>
<dbReference type="Gene3D" id="3.40.50.11540">
    <property type="entry name" value="NADH-ubiquinone oxidoreductase 51kDa subunit"/>
    <property type="match status" value="1"/>
</dbReference>
<dbReference type="Gene3D" id="1.20.1440.230">
    <property type="entry name" value="NADH-ubiquinone oxidoreductase 51kDa subunit, iron-sulphur binding domain"/>
    <property type="match status" value="1"/>
</dbReference>
<dbReference type="InterPro" id="IPR050837">
    <property type="entry name" value="ComplexI_51kDa_subunit"/>
</dbReference>
<dbReference type="InterPro" id="IPR001949">
    <property type="entry name" value="NADH-UbQ_OxRdtase_51kDa_CS"/>
</dbReference>
<dbReference type="InterPro" id="IPR011537">
    <property type="entry name" value="NADH-UbQ_OxRdtase_suF"/>
</dbReference>
<dbReference type="InterPro" id="IPR011538">
    <property type="entry name" value="Nuo51_FMN-bd"/>
</dbReference>
<dbReference type="InterPro" id="IPR037225">
    <property type="entry name" value="Nuo51_FMN-bd_sf"/>
</dbReference>
<dbReference type="InterPro" id="IPR019575">
    <property type="entry name" value="Nuop51_4Fe4S-bd"/>
</dbReference>
<dbReference type="InterPro" id="IPR037207">
    <property type="entry name" value="Nuop51_4Fe4S-bd_sf"/>
</dbReference>
<dbReference type="InterPro" id="IPR054765">
    <property type="entry name" value="SLBB_dom"/>
</dbReference>
<dbReference type="NCBIfam" id="TIGR01959">
    <property type="entry name" value="nuoF_fam"/>
    <property type="match status" value="1"/>
</dbReference>
<dbReference type="NCBIfam" id="NF010120">
    <property type="entry name" value="PRK13596.1"/>
    <property type="match status" value="1"/>
</dbReference>
<dbReference type="PANTHER" id="PTHR11780:SF10">
    <property type="entry name" value="NADH DEHYDROGENASE [UBIQUINONE] FLAVOPROTEIN 1, MITOCHONDRIAL"/>
    <property type="match status" value="1"/>
</dbReference>
<dbReference type="PANTHER" id="PTHR11780">
    <property type="entry name" value="NADH-UBIQUINONE OXIDOREDUCTASE FLAVOPROTEIN 1 NDUFV1"/>
    <property type="match status" value="1"/>
</dbReference>
<dbReference type="Pfam" id="PF01512">
    <property type="entry name" value="Complex1_51K"/>
    <property type="match status" value="1"/>
</dbReference>
<dbReference type="Pfam" id="PF10589">
    <property type="entry name" value="NADH_4Fe-4S"/>
    <property type="match status" value="1"/>
</dbReference>
<dbReference type="Pfam" id="PF22461">
    <property type="entry name" value="SLBB_2"/>
    <property type="match status" value="1"/>
</dbReference>
<dbReference type="SMART" id="SM00928">
    <property type="entry name" value="NADH_4Fe-4S"/>
    <property type="match status" value="1"/>
</dbReference>
<dbReference type="SUPFAM" id="SSF142019">
    <property type="entry name" value="Nqo1 FMN-binding domain-like"/>
    <property type="match status" value="1"/>
</dbReference>
<dbReference type="SUPFAM" id="SSF142984">
    <property type="entry name" value="Nqo1 middle domain-like"/>
    <property type="match status" value="1"/>
</dbReference>
<dbReference type="SUPFAM" id="SSF140490">
    <property type="entry name" value="Nqo1C-terminal domain-like"/>
    <property type="match status" value="1"/>
</dbReference>
<dbReference type="PROSITE" id="PS00644">
    <property type="entry name" value="COMPLEX1_51K_1"/>
    <property type="match status" value="1"/>
</dbReference>
<dbReference type="PROSITE" id="PS00645">
    <property type="entry name" value="COMPLEX1_51K_2"/>
    <property type="match status" value="1"/>
</dbReference>
<gene>
    <name type="primary">nuoF1</name>
    <name type="synonym">nuoF</name>
    <name type="ordered locus">R01270</name>
    <name type="ORF">SMc01918</name>
</gene>
<name>NUOF1_RHIME</name>
<feature type="chain" id="PRO_0000118576" description="NADH-quinone oxidoreductase subunit F 1">
    <location>
        <begin position="1"/>
        <end position="434"/>
    </location>
</feature>
<feature type="binding site" evidence="1">
    <location>
        <begin position="54"/>
        <end position="63"/>
    </location>
    <ligand>
        <name>NAD(+)</name>
        <dbReference type="ChEBI" id="CHEBI:57540"/>
    </ligand>
</feature>
<feature type="binding site" evidence="1">
    <location>
        <begin position="166"/>
        <end position="213"/>
    </location>
    <ligand>
        <name>FMN</name>
        <dbReference type="ChEBI" id="CHEBI:58210"/>
    </ligand>
</feature>
<feature type="binding site" evidence="2">
    <location>
        <position position="345"/>
    </location>
    <ligand>
        <name>[4Fe-4S] cluster</name>
        <dbReference type="ChEBI" id="CHEBI:49883"/>
    </ligand>
</feature>
<feature type="binding site" evidence="2">
    <location>
        <position position="348"/>
    </location>
    <ligand>
        <name>[4Fe-4S] cluster</name>
        <dbReference type="ChEBI" id="CHEBI:49883"/>
    </ligand>
</feature>
<feature type="binding site" evidence="2">
    <location>
        <position position="351"/>
    </location>
    <ligand>
        <name>[4Fe-4S] cluster</name>
        <dbReference type="ChEBI" id="CHEBI:49883"/>
    </ligand>
</feature>
<feature type="binding site" evidence="2">
    <location>
        <position position="391"/>
    </location>
    <ligand>
        <name>[4Fe-4S] cluster</name>
        <dbReference type="ChEBI" id="CHEBI:49883"/>
    </ligand>
</feature>
<protein>
    <recommendedName>
        <fullName>NADH-quinone oxidoreductase subunit F 1</fullName>
        <ecNumber>7.1.1.-</ecNumber>
    </recommendedName>
    <alternativeName>
        <fullName>NADH dehydrogenase I subunit F 1</fullName>
    </alternativeName>
    <alternativeName>
        <fullName>NDH-1 subunit F 1</fullName>
    </alternativeName>
</protein>
<comment type="function">
    <text evidence="1">NDH-1 shuttles electrons from NADH, via FMN and iron-sulfur (Fe-S) centers, to quinones in the respiratory chain. The immediate electron acceptor for the enzyme in this species is believed to be ubiquinone. Couples the redox reaction to proton translocation (for every two electrons transferred, four hydrogen ions are translocated across the cytoplasmic membrane), and thus conserves the redox energy in a proton gradient (By similarity).</text>
</comment>
<comment type="catalytic activity">
    <reaction>
        <text>a quinone + NADH + 5 H(+)(in) = a quinol + NAD(+) + 4 H(+)(out)</text>
        <dbReference type="Rhea" id="RHEA:57888"/>
        <dbReference type="ChEBI" id="CHEBI:15378"/>
        <dbReference type="ChEBI" id="CHEBI:24646"/>
        <dbReference type="ChEBI" id="CHEBI:57540"/>
        <dbReference type="ChEBI" id="CHEBI:57945"/>
        <dbReference type="ChEBI" id="CHEBI:132124"/>
    </reaction>
</comment>
<comment type="cofactor">
    <cofactor evidence="3">
        <name>FMN</name>
        <dbReference type="ChEBI" id="CHEBI:58210"/>
    </cofactor>
    <text evidence="3">Binds 1 FMN.</text>
</comment>
<comment type="cofactor">
    <cofactor evidence="3">
        <name>[4Fe-4S] cluster</name>
        <dbReference type="ChEBI" id="CHEBI:49883"/>
    </cofactor>
    <text evidence="3">Binds 1 [4Fe-4S] cluster.</text>
</comment>
<comment type="similarity">
    <text evidence="3">Belongs to the complex I 51 kDa subunit family.</text>
</comment>
<evidence type="ECO:0000250" key="1"/>
<evidence type="ECO:0000255" key="2"/>
<evidence type="ECO:0000305" key="3"/>
<proteinExistence type="inferred from homology"/>
<accession>P56912</accession>
<reference key="1">
    <citation type="submission" date="1999-07" db="EMBL/GenBank/DDBJ databases">
        <title>Rhizobium meliloti carries two sets of nuo genes.</title>
        <authorList>
            <person name="Putnoky P."/>
            <person name="Jady B."/>
            <person name="Chellapilla K.P."/>
            <person name="Barta F."/>
            <person name="Kiss E."/>
        </authorList>
    </citation>
    <scope>NUCLEOTIDE SEQUENCE [GENOMIC DNA]</scope>
    <source>
        <strain>41</strain>
    </source>
</reference>
<reference key="2">
    <citation type="journal article" date="2001" name="Proc. Natl. Acad. Sci. U.S.A.">
        <title>Analysis of the chromosome sequence of the legume symbiont Sinorhizobium meliloti strain 1021.</title>
        <authorList>
            <person name="Capela D."/>
            <person name="Barloy-Hubler F."/>
            <person name="Gouzy J."/>
            <person name="Bothe G."/>
            <person name="Ampe F."/>
            <person name="Batut J."/>
            <person name="Boistard P."/>
            <person name="Becker A."/>
            <person name="Boutry M."/>
            <person name="Cadieu E."/>
            <person name="Dreano S."/>
            <person name="Gloux S."/>
            <person name="Godrie T."/>
            <person name="Goffeau A."/>
            <person name="Kahn D."/>
            <person name="Kiss E."/>
            <person name="Lelaure V."/>
            <person name="Masuy D."/>
            <person name="Pohl T."/>
            <person name="Portetelle D."/>
            <person name="Puehler A."/>
            <person name="Purnelle B."/>
            <person name="Ramsperger U."/>
            <person name="Renard C."/>
            <person name="Thebault P."/>
            <person name="Vandenbol M."/>
            <person name="Weidner S."/>
            <person name="Galibert F."/>
        </authorList>
    </citation>
    <scope>NUCLEOTIDE SEQUENCE [LARGE SCALE GENOMIC DNA]</scope>
    <source>
        <strain>1021</strain>
    </source>
</reference>
<reference key="3">
    <citation type="journal article" date="2001" name="Science">
        <title>The composite genome of the legume symbiont Sinorhizobium meliloti.</title>
        <authorList>
            <person name="Galibert F."/>
            <person name="Finan T.M."/>
            <person name="Long S.R."/>
            <person name="Puehler A."/>
            <person name="Abola P."/>
            <person name="Ampe F."/>
            <person name="Barloy-Hubler F."/>
            <person name="Barnett M.J."/>
            <person name="Becker A."/>
            <person name="Boistard P."/>
            <person name="Bothe G."/>
            <person name="Boutry M."/>
            <person name="Bowser L."/>
            <person name="Buhrmester J."/>
            <person name="Cadieu E."/>
            <person name="Capela D."/>
            <person name="Chain P."/>
            <person name="Cowie A."/>
            <person name="Davis R.W."/>
            <person name="Dreano S."/>
            <person name="Federspiel N.A."/>
            <person name="Fisher R.F."/>
            <person name="Gloux S."/>
            <person name="Godrie T."/>
            <person name="Goffeau A."/>
            <person name="Golding B."/>
            <person name="Gouzy J."/>
            <person name="Gurjal M."/>
            <person name="Hernandez-Lucas I."/>
            <person name="Hong A."/>
            <person name="Huizar L."/>
            <person name="Hyman R.W."/>
            <person name="Jones T."/>
            <person name="Kahn D."/>
            <person name="Kahn M.L."/>
            <person name="Kalman S."/>
            <person name="Keating D.H."/>
            <person name="Kiss E."/>
            <person name="Komp C."/>
            <person name="Lelaure V."/>
            <person name="Masuy D."/>
            <person name="Palm C."/>
            <person name="Peck M.C."/>
            <person name="Pohl T.M."/>
            <person name="Portetelle D."/>
            <person name="Purnelle B."/>
            <person name="Ramsperger U."/>
            <person name="Surzycki R."/>
            <person name="Thebault P."/>
            <person name="Vandenbol M."/>
            <person name="Vorhoelter F.J."/>
            <person name="Weidner S."/>
            <person name="Wells D.H."/>
            <person name="Wong K."/>
            <person name="Yeh K.-C."/>
            <person name="Batut J."/>
        </authorList>
    </citation>
    <scope>NUCLEOTIDE SEQUENCE [LARGE SCALE GENOMIC DNA]</scope>
    <source>
        <strain>1021</strain>
    </source>
</reference>